<organism>
    <name type="scientific">Klebsiella pneumoniae (strain 342)</name>
    <dbReference type="NCBI Taxonomy" id="507522"/>
    <lineage>
        <taxon>Bacteria</taxon>
        <taxon>Pseudomonadati</taxon>
        <taxon>Pseudomonadota</taxon>
        <taxon>Gammaproteobacteria</taxon>
        <taxon>Enterobacterales</taxon>
        <taxon>Enterobacteriaceae</taxon>
        <taxon>Klebsiella/Raoultella group</taxon>
        <taxon>Klebsiella</taxon>
        <taxon>Klebsiella pneumoniae complex</taxon>
    </lineage>
</organism>
<evidence type="ECO:0000255" key="1">
    <source>
        <dbReference type="HAMAP-Rule" id="MF_01423"/>
    </source>
</evidence>
<protein>
    <recommendedName>
        <fullName evidence="1">Multidrug resistance protein MdtB</fullName>
    </recommendedName>
    <alternativeName>
        <fullName evidence="1">Multidrug transporter MdtB</fullName>
    </alternativeName>
</protein>
<dbReference type="EMBL" id="CP000964">
    <property type="protein sequence ID" value="ACI07243.1"/>
    <property type="molecule type" value="Genomic_DNA"/>
</dbReference>
<dbReference type="SMR" id="B5XPB9"/>
<dbReference type="KEGG" id="kpe:KPK_1638"/>
<dbReference type="HOGENOM" id="CLU_002755_1_2_6"/>
<dbReference type="Proteomes" id="UP000001734">
    <property type="component" value="Chromosome"/>
</dbReference>
<dbReference type="GO" id="GO:0005886">
    <property type="term" value="C:plasma membrane"/>
    <property type="evidence" value="ECO:0007669"/>
    <property type="project" value="UniProtKB-SubCell"/>
</dbReference>
<dbReference type="GO" id="GO:0042910">
    <property type="term" value="F:xenobiotic transmembrane transporter activity"/>
    <property type="evidence" value="ECO:0007669"/>
    <property type="project" value="TreeGrafter"/>
</dbReference>
<dbReference type="FunFam" id="1.20.1640.10:FF:000001">
    <property type="entry name" value="Efflux pump membrane transporter"/>
    <property type="match status" value="1"/>
</dbReference>
<dbReference type="FunFam" id="3.30.70.1430:FF:000001">
    <property type="entry name" value="Efflux pump membrane transporter"/>
    <property type="match status" value="1"/>
</dbReference>
<dbReference type="FunFam" id="3.30.2090.10:FF:000003">
    <property type="entry name" value="Multidrug resistance protein MdtB"/>
    <property type="match status" value="1"/>
</dbReference>
<dbReference type="Gene3D" id="3.30.70.1430">
    <property type="entry name" value="Multidrug efflux transporter AcrB pore domain"/>
    <property type="match status" value="2"/>
</dbReference>
<dbReference type="Gene3D" id="3.30.70.1440">
    <property type="entry name" value="Multidrug efflux transporter AcrB pore domain"/>
    <property type="match status" value="1"/>
</dbReference>
<dbReference type="Gene3D" id="3.30.70.1320">
    <property type="entry name" value="Multidrug efflux transporter AcrB pore domain like"/>
    <property type="match status" value="1"/>
</dbReference>
<dbReference type="Gene3D" id="3.30.2090.10">
    <property type="entry name" value="Multidrug efflux transporter AcrB TolC docking domain, DN and DC subdomains"/>
    <property type="match status" value="2"/>
</dbReference>
<dbReference type="Gene3D" id="1.20.1640.10">
    <property type="entry name" value="Multidrug efflux transporter AcrB transmembrane domain"/>
    <property type="match status" value="2"/>
</dbReference>
<dbReference type="HAMAP" id="MF_01423">
    <property type="entry name" value="MdtB"/>
    <property type="match status" value="1"/>
</dbReference>
<dbReference type="InterPro" id="IPR027463">
    <property type="entry name" value="AcrB_DN_DC_subdom"/>
</dbReference>
<dbReference type="InterPro" id="IPR001036">
    <property type="entry name" value="Acrflvin-R"/>
</dbReference>
<dbReference type="InterPro" id="IPR022831">
    <property type="entry name" value="Multidrug-R_MdtB"/>
</dbReference>
<dbReference type="NCBIfam" id="NF007798">
    <property type="entry name" value="PRK10503.1"/>
    <property type="match status" value="1"/>
</dbReference>
<dbReference type="NCBIfam" id="NF033617">
    <property type="entry name" value="RND_permease_2"/>
    <property type="match status" value="1"/>
</dbReference>
<dbReference type="PANTHER" id="PTHR32063">
    <property type="match status" value="1"/>
</dbReference>
<dbReference type="PANTHER" id="PTHR32063:SF21">
    <property type="entry name" value="MULTIDRUG RESISTANCE PROTEIN MDTB"/>
    <property type="match status" value="1"/>
</dbReference>
<dbReference type="Pfam" id="PF00873">
    <property type="entry name" value="ACR_tran"/>
    <property type="match status" value="1"/>
</dbReference>
<dbReference type="PRINTS" id="PR00702">
    <property type="entry name" value="ACRIFLAVINRP"/>
</dbReference>
<dbReference type="SUPFAM" id="SSF82693">
    <property type="entry name" value="Multidrug efflux transporter AcrB pore domain, PN1, PN2, PC1 and PC2 subdomains"/>
    <property type="match status" value="3"/>
</dbReference>
<dbReference type="SUPFAM" id="SSF82714">
    <property type="entry name" value="Multidrug efflux transporter AcrB TolC docking domain, DN and DC subdomains"/>
    <property type="match status" value="2"/>
</dbReference>
<dbReference type="SUPFAM" id="SSF82866">
    <property type="entry name" value="Multidrug efflux transporter AcrB transmembrane domain"/>
    <property type="match status" value="2"/>
</dbReference>
<accession>B5XPB9</accession>
<name>MDTB_KLEP3</name>
<sequence>MQVLPPGRTGGPSRLFIMRPVATTLLMVAILLAGIIGYRFLPVSALPEVDYPTIQVVTLYPGASPDVVTSAITAPLERQFGQMSGLKQMSSQSSGGASVVTLQFQLTLPLDVAEQEVQAAINAATNLLPSDLPNPPVYSKVNPADPPIMTLAVTSSAIPMTQVEDMVETRVAQKISQVSGVGLVTLAGGQRPAVRVKLNAQAIAALGLTSETVRTAITSANVNSAKGSLDGPARAVTLSANDQMQSAEDYRRLIIAYQNGAPIRLGDVASVEQGAENSWLGAWANQQRAIVMNVQRQPGANIIDTADSIRQMLPQLTESLPKSVKVQVLSDRTTNIRASVRDTQFELMLAIALVVMIIYLFLRNVPATIIPGVAVPLSLVGTFAVMVFLDFSINNLTLMALTIATGFVVDDAIVVIENISRYIEKGEKPLAAALKGAGEIGFTIISLTFSLIAVLIPLLFMGDIVGRLFREFAVTLAVAILISAVVSLTLTPMMCARMLSHESLRKQNRFSRASERFFERVIAVYGRWLSRVLNHPWLTLGVALSTLALSIILWVFIPKGFFPIQDNGIIQGTLQAPQSVSFASMAERQRQVASIILKDPAVESLTSFVGVDGTNPALNSARLQINLKPLDERDDRVQTVISRLQQAVDGVPGVALYLQPTQDLTIDTTVSRTQYQFTLQANSLEALSTWVPPLLSRLQAQPQLADVSSDWQDKGLAAYIKVDRDSASRLGISMADVDNALYNAFGQRLISTIYTQANQYRVVLEQDTEATPGLAALDNIRLTSSDGGIVPLTAIATVEQRFTPLSVNHLDQFPVTTISFNVPDNYSLGEAVDAILAAEQSLDFPTDIRTQFQGSSLAFQSALGSTVWLVVAAVVAMYIVLGVLYESFIHPITILSTLPTAGVGALLALWLAGSELDVIAIIGIILLIGIVKKNAIMMIDFALAAEREQGMPPREAIYQACLLRFRPILMTTLAALLGALPLMLSTGVGAELRRPLGIGMVGGLMLSQVLTLFTTPVIYLLFDRLSLHLKRRFPRQEEEA</sequence>
<keyword id="KW-0997">Cell inner membrane</keyword>
<keyword id="KW-1003">Cell membrane</keyword>
<keyword id="KW-0472">Membrane</keyword>
<keyword id="KW-0812">Transmembrane</keyword>
<keyword id="KW-1133">Transmembrane helix</keyword>
<keyword id="KW-0813">Transport</keyword>
<comment type="subunit">
    <text evidence="1">Part of a tripartite efflux system composed of MdtA, MdtB and MdtC. MdtB forms a heteromultimer with MdtC.</text>
</comment>
<comment type="subcellular location">
    <subcellularLocation>
        <location evidence="1">Cell inner membrane</location>
        <topology evidence="1">Multi-pass membrane protein</topology>
    </subcellularLocation>
</comment>
<comment type="similarity">
    <text evidence="1">Belongs to the resistance-nodulation-cell division (RND) (TC 2.A.6) family. MdtB subfamily.</text>
</comment>
<feature type="chain" id="PRO_1000145656" description="Multidrug resistance protein MdtB">
    <location>
        <begin position="1"/>
        <end position="1040"/>
    </location>
</feature>
<feature type="transmembrane region" description="Helical" evidence="1">
    <location>
        <begin position="16"/>
        <end position="36"/>
    </location>
</feature>
<feature type="transmembrane region" description="Helical" evidence="1">
    <location>
        <begin position="342"/>
        <end position="362"/>
    </location>
</feature>
<feature type="transmembrane region" description="Helical" evidence="1">
    <location>
        <begin position="369"/>
        <end position="389"/>
    </location>
</feature>
<feature type="transmembrane region" description="Helical" evidence="1">
    <location>
        <begin position="396"/>
        <end position="416"/>
    </location>
</feature>
<feature type="transmembrane region" description="Helical" evidence="1">
    <location>
        <begin position="440"/>
        <end position="460"/>
    </location>
</feature>
<feature type="transmembrane region" description="Helical" evidence="1">
    <location>
        <begin position="472"/>
        <end position="492"/>
    </location>
</feature>
<feature type="transmembrane region" description="Helical" evidence="1">
    <location>
        <begin position="537"/>
        <end position="557"/>
    </location>
</feature>
<feature type="transmembrane region" description="Helical" evidence="1">
    <location>
        <begin position="863"/>
        <end position="883"/>
    </location>
</feature>
<feature type="transmembrane region" description="Helical" evidence="1">
    <location>
        <begin position="888"/>
        <end position="908"/>
    </location>
</feature>
<feature type="transmembrane region" description="Helical" evidence="1">
    <location>
        <begin position="911"/>
        <end position="931"/>
    </location>
</feature>
<feature type="transmembrane region" description="Helical" evidence="1">
    <location>
        <begin position="968"/>
        <end position="988"/>
    </location>
</feature>
<feature type="transmembrane region" description="Helical" evidence="1">
    <location>
        <begin position="998"/>
        <end position="1018"/>
    </location>
</feature>
<gene>
    <name evidence="1" type="primary">mdtB</name>
    <name type="ordered locus">KPK_1638</name>
</gene>
<reference key="1">
    <citation type="journal article" date="2008" name="PLoS Genet.">
        <title>Complete genome sequence of the N2-fixing broad host range endophyte Klebsiella pneumoniae 342 and virulence predictions verified in mice.</title>
        <authorList>
            <person name="Fouts D.E."/>
            <person name="Tyler H.L."/>
            <person name="DeBoy R.T."/>
            <person name="Daugherty S."/>
            <person name="Ren Q."/>
            <person name="Badger J.H."/>
            <person name="Durkin A.S."/>
            <person name="Huot H."/>
            <person name="Shrivastava S."/>
            <person name="Kothari S."/>
            <person name="Dodson R.J."/>
            <person name="Mohamoud Y."/>
            <person name="Khouri H."/>
            <person name="Roesch L.F.W."/>
            <person name="Krogfelt K.A."/>
            <person name="Struve C."/>
            <person name="Triplett E.W."/>
            <person name="Methe B.A."/>
        </authorList>
    </citation>
    <scope>NUCLEOTIDE SEQUENCE [LARGE SCALE GENOMIC DNA]</scope>
    <source>
        <strain>342</strain>
    </source>
</reference>
<proteinExistence type="inferred from homology"/>